<reference key="1">
    <citation type="journal article" date="2009" name="PLoS ONE">
        <title>Genome degradation in Brucella ovis corresponds with narrowing of its host range and tissue tropism.</title>
        <authorList>
            <person name="Tsolis R.M."/>
            <person name="Seshadri R."/>
            <person name="Santos R.L."/>
            <person name="Sangari F.J."/>
            <person name="Lobo J.M."/>
            <person name="de Jong M.F."/>
            <person name="Ren Q."/>
            <person name="Myers G."/>
            <person name="Brinkac L.M."/>
            <person name="Nelson W.C."/>
            <person name="Deboy R.T."/>
            <person name="Angiuoli S."/>
            <person name="Khouri H."/>
            <person name="Dimitrov G."/>
            <person name="Robinson J.R."/>
            <person name="Mulligan S."/>
            <person name="Walker R.L."/>
            <person name="Elzer P.E."/>
            <person name="Hassan K.A."/>
            <person name="Paulsen I.T."/>
        </authorList>
    </citation>
    <scope>NUCLEOTIDE SEQUENCE [LARGE SCALE GENOMIC DNA]</scope>
    <source>
        <strain>ATCC 25840 / 63/290 / NCTC 10512</strain>
    </source>
</reference>
<name>SECA_BRUO2</name>
<evidence type="ECO:0000255" key="1">
    <source>
        <dbReference type="HAMAP-Rule" id="MF_01382"/>
    </source>
</evidence>
<evidence type="ECO:0000256" key="2">
    <source>
        <dbReference type="SAM" id="MobiDB-lite"/>
    </source>
</evidence>
<sequence length="906" mass="102871">MVSFGGLARKIFGSSNDRRVKTLRQRAEQITALEKNYENLTDEQLQAKTAEFRAALAEGKSLDSLLPDAFATAREAAKRVLGMRPFDVQLIGGMVLHERGIAEMRTGEGKTLMATLPVYLNALEGKGVHVVTVNDYLATRDAETMGRLYNFLGLTVGVIKHGLDDDERRAAYACDITYGTNNELGFDYLRDNMKYERAQMVQRPHNYAIVDEVDSILIDEARTPLIISGPLEDRSDFYNLIDTFIPPLAEEDYEVDEKQKTAIFTEVGTEKVEKLLEAAGHLKGESLYDIENVAVVHHLNNALRAHKLFQRDKDYIVRNDEIVIIDEFTGRMMPGRRYSEGLHQALEAKEHVTIQPENQTLASITFQNYFRMYNKLSGMTGTAATEAEEFGNIYGLEVLEIPTNLPVQRIDEDDEVYRTVEEKYRAIVRDIRASHEKGQPILVGTTSIEKSEQLAERLRREGIKGFQVLNARYHEQEAYIIAQAGVPGAVTIATNMAGRGTDIQLGGNLEMRVRQELSDVPEGPEREEKIAAIKADIAQLKEKALAAGGLYVLATERHESRRIDNQLRGRSGRQGDPGRSKFFLSLQDDLMRIFGSDRMDGMLQKLGLKEDEAIVHPWINKALEKAQKKVEARNFEIRKNLLKYDDVMNDQRKVIFEQRLEMMDEEDLTETVAEMRHEVIEDMVILRIPKDAYAEKWDIAGLKQDIASKLNLDLPVEEWAKEEGIAEEEFENRIKEAADKAAAEKAERFGPQIMTYVEKSVIMQSLDNLWREHLVNLDHLRSVVGFRGYAQRDPLNEYKTEAFELFQTMLANLREVVISQLMRVEIVREAPPEPQLPPMAGLHIDGTTGENDFDEAIWAEHQHDDRIVPPAQRDPADPRTWGKVSRNEPCPCGSGKKYKHCHGAFE</sequence>
<comment type="function">
    <text evidence="1">Part of the Sec protein translocase complex. Interacts with the SecYEG preprotein conducting channel. Has a central role in coupling the hydrolysis of ATP to the transfer of proteins into and across the cell membrane, serving both as a receptor for the preprotein-SecB complex and as an ATP-driven molecular motor driving the stepwise translocation of polypeptide chains across the membrane.</text>
</comment>
<comment type="catalytic activity">
    <reaction evidence="1">
        <text>ATP + H2O + cellular proteinSide 1 = ADP + phosphate + cellular proteinSide 2.</text>
        <dbReference type="EC" id="7.4.2.8"/>
    </reaction>
</comment>
<comment type="cofactor">
    <cofactor evidence="1">
        <name>Zn(2+)</name>
        <dbReference type="ChEBI" id="CHEBI:29105"/>
    </cofactor>
    <text evidence="1">May bind 1 zinc ion per subunit.</text>
</comment>
<comment type="subunit">
    <text evidence="1">Monomer and homodimer. Part of the essential Sec protein translocation apparatus which comprises SecA, SecYEG and auxiliary proteins SecDF-YajC and YidC.</text>
</comment>
<comment type="subcellular location">
    <subcellularLocation>
        <location evidence="1">Cell inner membrane</location>
        <topology evidence="1">Peripheral membrane protein</topology>
        <orientation evidence="1">Cytoplasmic side</orientation>
    </subcellularLocation>
    <subcellularLocation>
        <location evidence="1">Cytoplasm</location>
    </subcellularLocation>
    <text evidence="1">Distribution is 50-50.</text>
</comment>
<comment type="similarity">
    <text evidence="1">Belongs to the SecA family.</text>
</comment>
<organism>
    <name type="scientific">Brucella ovis (strain ATCC 25840 / 63/290 / NCTC 10512)</name>
    <dbReference type="NCBI Taxonomy" id="444178"/>
    <lineage>
        <taxon>Bacteria</taxon>
        <taxon>Pseudomonadati</taxon>
        <taxon>Pseudomonadota</taxon>
        <taxon>Alphaproteobacteria</taxon>
        <taxon>Hyphomicrobiales</taxon>
        <taxon>Brucellaceae</taxon>
        <taxon>Brucella/Ochrobactrum group</taxon>
        <taxon>Brucella</taxon>
    </lineage>
</organism>
<keyword id="KW-0067">ATP-binding</keyword>
<keyword id="KW-0997">Cell inner membrane</keyword>
<keyword id="KW-1003">Cell membrane</keyword>
<keyword id="KW-0963">Cytoplasm</keyword>
<keyword id="KW-0472">Membrane</keyword>
<keyword id="KW-0479">Metal-binding</keyword>
<keyword id="KW-0547">Nucleotide-binding</keyword>
<keyword id="KW-0653">Protein transport</keyword>
<keyword id="KW-1278">Translocase</keyword>
<keyword id="KW-0811">Translocation</keyword>
<keyword id="KW-0813">Transport</keyword>
<keyword id="KW-0862">Zinc</keyword>
<feature type="chain" id="PRO_1000073466" description="Protein translocase subunit SecA">
    <location>
        <begin position="1"/>
        <end position="906"/>
    </location>
</feature>
<feature type="region of interest" description="Disordered" evidence="2">
    <location>
        <begin position="868"/>
        <end position="887"/>
    </location>
</feature>
<feature type="binding site" evidence="1">
    <location>
        <position position="89"/>
    </location>
    <ligand>
        <name>ATP</name>
        <dbReference type="ChEBI" id="CHEBI:30616"/>
    </ligand>
</feature>
<feature type="binding site" evidence="1">
    <location>
        <begin position="107"/>
        <end position="111"/>
    </location>
    <ligand>
        <name>ATP</name>
        <dbReference type="ChEBI" id="CHEBI:30616"/>
    </ligand>
</feature>
<feature type="binding site" evidence="1">
    <location>
        <position position="502"/>
    </location>
    <ligand>
        <name>ATP</name>
        <dbReference type="ChEBI" id="CHEBI:30616"/>
    </ligand>
</feature>
<feature type="binding site" evidence="1">
    <location>
        <position position="890"/>
    </location>
    <ligand>
        <name>Zn(2+)</name>
        <dbReference type="ChEBI" id="CHEBI:29105"/>
    </ligand>
</feature>
<feature type="binding site" evidence="1">
    <location>
        <position position="892"/>
    </location>
    <ligand>
        <name>Zn(2+)</name>
        <dbReference type="ChEBI" id="CHEBI:29105"/>
    </ligand>
</feature>
<feature type="binding site" evidence="1">
    <location>
        <position position="901"/>
    </location>
    <ligand>
        <name>Zn(2+)</name>
        <dbReference type="ChEBI" id="CHEBI:29105"/>
    </ligand>
</feature>
<feature type="binding site" evidence="1">
    <location>
        <position position="902"/>
    </location>
    <ligand>
        <name>Zn(2+)</name>
        <dbReference type="ChEBI" id="CHEBI:29105"/>
    </ligand>
</feature>
<accession>A5VSR9</accession>
<proteinExistence type="inferred from homology"/>
<protein>
    <recommendedName>
        <fullName evidence="1">Protein translocase subunit SecA</fullName>
        <ecNumber evidence="1">7.4.2.8</ecNumber>
    </recommendedName>
</protein>
<dbReference type="EC" id="7.4.2.8" evidence="1"/>
<dbReference type="EMBL" id="CP000708">
    <property type="protein sequence ID" value="ABQ60224.1"/>
    <property type="molecule type" value="Genomic_DNA"/>
</dbReference>
<dbReference type="RefSeq" id="WP_002965012.1">
    <property type="nucleotide sequence ID" value="NC_009505.1"/>
</dbReference>
<dbReference type="SMR" id="A5VSR9"/>
<dbReference type="GeneID" id="93017729"/>
<dbReference type="KEGG" id="bov:BOV_1871"/>
<dbReference type="HOGENOM" id="CLU_005314_3_0_5"/>
<dbReference type="PhylomeDB" id="A5VSR9"/>
<dbReference type="Proteomes" id="UP000006383">
    <property type="component" value="Chromosome I"/>
</dbReference>
<dbReference type="GO" id="GO:0031522">
    <property type="term" value="C:cell envelope Sec protein transport complex"/>
    <property type="evidence" value="ECO:0007669"/>
    <property type="project" value="TreeGrafter"/>
</dbReference>
<dbReference type="GO" id="GO:0005829">
    <property type="term" value="C:cytosol"/>
    <property type="evidence" value="ECO:0007669"/>
    <property type="project" value="TreeGrafter"/>
</dbReference>
<dbReference type="GO" id="GO:0005886">
    <property type="term" value="C:plasma membrane"/>
    <property type="evidence" value="ECO:0007669"/>
    <property type="project" value="UniProtKB-SubCell"/>
</dbReference>
<dbReference type="GO" id="GO:0005524">
    <property type="term" value="F:ATP binding"/>
    <property type="evidence" value="ECO:0007669"/>
    <property type="project" value="UniProtKB-UniRule"/>
</dbReference>
<dbReference type="GO" id="GO:0046872">
    <property type="term" value="F:metal ion binding"/>
    <property type="evidence" value="ECO:0007669"/>
    <property type="project" value="UniProtKB-KW"/>
</dbReference>
<dbReference type="GO" id="GO:0008564">
    <property type="term" value="F:protein-exporting ATPase activity"/>
    <property type="evidence" value="ECO:0007669"/>
    <property type="project" value="UniProtKB-EC"/>
</dbReference>
<dbReference type="GO" id="GO:0065002">
    <property type="term" value="P:intracellular protein transmembrane transport"/>
    <property type="evidence" value="ECO:0007669"/>
    <property type="project" value="UniProtKB-UniRule"/>
</dbReference>
<dbReference type="GO" id="GO:0017038">
    <property type="term" value="P:protein import"/>
    <property type="evidence" value="ECO:0007669"/>
    <property type="project" value="InterPro"/>
</dbReference>
<dbReference type="GO" id="GO:0006605">
    <property type="term" value="P:protein targeting"/>
    <property type="evidence" value="ECO:0007669"/>
    <property type="project" value="UniProtKB-UniRule"/>
</dbReference>
<dbReference type="GO" id="GO:0043952">
    <property type="term" value="P:protein transport by the Sec complex"/>
    <property type="evidence" value="ECO:0007669"/>
    <property type="project" value="TreeGrafter"/>
</dbReference>
<dbReference type="CDD" id="cd17928">
    <property type="entry name" value="DEXDc_SecA"/>
    <property type="match status" value="1"/>
</dbReference>
<dbReference type="CDD" id="cd18803">
    <property type="entry name" value="SF2_C_secA"/>
    <property type="match status" value="1"/>
</dbReference>
<dbReference type="FunFam" id="3.90.1440.10:FF:000001">
    <property type="entry name" value="Preprotein translocase subunit SecA"/>
    <property type="match status" value="1"/>
</dbReference>
<dbReference type="FunFam" id="1.10.3060.10:FF:000003">
    <property type="entry name" value="Protein translocase subunit SecA"/>
    <property type="match status" value="1"/>
</dbReference>
<dbReference type="FunFam" id="3.40.50.300:FF:000334">
    <property type="entry name" value="Protein translocase subunit SecA"/>
    <property type="match status" value="1"/>
</dbReference>
<dbReference type="FunFam" id="3.40.50.300:FF:001790">
    <property type="entry name" value="Protein translocase subunit SecA"/>
    <property type="match status" value="1"/>
</dbReference>
<dbReference type="Gene3D" id="3.10.450.50">
    <property type="match status" value="1"/>
</dbReference>
<dbReference type="Gene3D" id="1.10.3060.10">
    <property type="entry name" value="Helical scaffold and wing domains of SecA"/>
    <property type="match status" value="1"/>
</dbReference>
<dbReference type="Gene3D" id="3.40.50.300">
    <property type="entry name" value="P-loop containing nucleotide triphosphate hydrolases"/>
    <property type="match status" value="2"/>
</dbReference>
<dbReference type="Gene3D" id="3.90.1440.10">
    <property type="entry name" value="SecA, preprotein cross-linking domain"/>
    <property type="match status" value="1"/>
</dbReference>
<dbReference type="HAMAP" id="MF_01382">
    <property type="entry name" value="SecA"/>
    <property type="match status" value="1"/>
</dbReference>
<dbReference type="InterPro" id="IPR014001">
    <property type="entry name" value="Helicase_ATP-bd"/>
</dbReference>
<dbReference type="InterPro" id="IPR001650">
    <property type="entry name" value="Helicase_C-like"/>
</dbReference>
<dbReference type="InterPro" id="IPR027417">
    <property type="entry name" value="P-loop_NTPase"/>
</dbReference>
<dbReference type="InterPro" id="IPR004027">
    <property type="entry name" value="SEC_C_motif"/>
</dbReference>
<dbReference type="InterPro" id="IPR000185">
    <property type="entry name" value="SecA"/>
</dbReference>
<dbReference type="InterPro" id="IPR020937">
    <property type="entry name" value="SecA_CS"/>
</dbReference>
<dbReference type="InterPro" id="IPR011115">
    <property type="entry name" value="SecA_DEAD"/>
</dbReference>
<dbReference type="InterPro" id="IPR014018">
    <property type="entry name" value="SecA_motor_DEAD"/>
</dbReference>
<dbReference type="InterPro" id="IPR011130">
    <property type="entry name" value="SecA_preprotein_X-link_dom"/>
</dbReference>
<dbReference type="InterPro" id="IPR044722">
    <property type="entry name" value="SecA_SF2_C"/>
</dbReference>
<dbReference type="InterPro" id="IPR011116">
    <property type="entry name" value="SecA_Wing/Scaffold"/>
</dbReference>
<dbReference type="InterPro" id="IPR036266">
    <property type="entry name" value="SecA_Wing/Scaffold_sf"/>
</dbReference>
<dbReference type="InterPro" id="IPR036670">
    <property type="entry name" value="SecA_X-link_sf"/>
</dbReference>
<dbReference type="NCBIfam" id="NF009538">
    <property type="entry name" value="PRK12904.1"/>
    <property type="match status" value="1"/>
</dbReference>
<dbReference type="NCBIfam" id="TIGR00963">
    <property type="entry name" value="secA"/>
    <property type="match status" value="1"/>
</dbReference>
<dbReference type="PANTHER" id="PTHR30612:SF0">
    <property type="entry name" value="CHLOROPLAST PROTEIN-TRANSPORTING ATPASE"/>
    <property type="match status" value="1"/>
</dbReference>
<dbReference type="PANTHER" id="PTHR30612">
    <property type="entry name" value="SECA INNER MEMBRANE COMPONENT OF SEC PROTEIN SECRETION SYSTEM"/>
    <property type="match status" value="1"/>
</dbReference>
<dbReference type="Pfam" id="PF21090">
    <property type="entry name" value="P-loop_SecA"/>
    <property type="match status" value="1"/>
</dbReference>
<dbReference type="Pfam" id="PF02810">
    <property type="entry name" value="SEC-C"/>
    <property type="match status" value="1"/>
</dbReference>
<dbReference type="Pfam" id="PF07517">
    <property type="entry name" value="SecA_DEAD"/>
    <property type="match status" value="1"/>
</dbReference>
<dbReference type="Pfam" id="PF01043">
    <property type="entry name" value="SecA_PP_bind"/>
    <property type="match status" value="1"/>
</dbReference>
<dbReference type="Pfam" id="PF07516">
    <property type="entry name" value="SecA_SW"/>
    <property type="match status" value="1"/>
</dbReference>
<dbReference type="PRINTS" id="PR00906">
    <property type="entry name" value="SECA"/>
</dbReference>
<dbReference type="SMART" id="SM00957">
    <property type="entry name" value="SecA_DEAD"/>
    <property type="match status" value="1"/>
</dbReference>
<dbReference type="SMART" id="SM00958">
    <property type="entry name" value="SecA_PP_bind"/>
    <property type="match status" value="1"/>
</dbReference>
<dbReference type="SUPFAM" id="SSF81886">
    <property type="entry name" value="Helical scaffold and wing domains of SecA"/>
    <property type="match status" value="1"/>
</dbReference>
<dbReference type="SUPFAM" id="SSF52540">
    <property type="entry name" value="P-loop containing nucleoside triphosphate hydrolases"/>
    <property type="match status" value="2"/>
</dbReference>
<dbReference type="SUPFAM" id="SSF81767">
    <property type="entry name" value="Pre-protein crosslinking domain of SecA"/>
    <property type="match status" value="1"/>
</dbReference>
<dbReference type="PROSITE" id="PS01312">
    <property type="entry name" value="SECA"/>
    <property type="match status" value="1"/>
</dbReference>
<dbReference type="PROSITE" id="PS51196">
    <property type="entry name" value="SECA_MOTOR_DEAD"/>
    <property type="match status" value="1"/>
</dbReference>
<gene>
    <name evidence="1" type="primary">secA</name>
    <name type="ordered locus">BOV_1871</name>
</gene>